<comment type="cofactor">
    <cofactor evidence="1">
        <name>Zn(2+)</name>
        <dbReference type="ChEBI" id="CHEBI:29105"/>
    </cofactor>
    <text evidence="1">Binds 1 zinc ion per subunit.</text>
</comment>
<comment type="subcellular location">
    <subcellularLocation>
        <location evidence="1">Cell inner membrane</location>
        <topology evidence="1">Multi-pass membrane protein</topology>
    </subcellularLocation>
</comment>
<comment type="similarity">
    <text evidence="1">Belongs to the peptidase M48B family.</text>
</comment>
<organism>
    <name type="scientific">Xanthomonas oryzae pv. oryzae (strain MAFF 311018)</name>
    <dbReference type="NCBI Taxonomy" id="342109"/>
    <lineage>
        <taxon>Bacteria</taxon>
        <taxon>Pseudomonadati</taxon>
        <taxon>Pseudomonadota</taxon>
        <taxon>Gammaproteobacteria</taxon>
        <taxon>Lysobacterales</taxon>
        <taxon>Lysobacteraceae</taxon>
        <taxon>Xanthomonas</taxon>
    </lineage>
</organism>
<proteinExistence type="inferred from homology"/>
<name>HTPX_XANOM</name>
<gene>
    <name evidence="1" type="primary">htpX</name>
    <name type="ordered locus">XOO2571</name>
</gene>
<reference key="1">
    <citation type="journal article" date="2005" name="Jpn. Agric. Res. Q.">
        <title>Genome sequence of Xanthomonas oryzae pv. oryzae suggests contribution of large numbers of effector genes and insertion sequences to its race diversity.</title>
        <authorList>
            <person name="Ochiai H."/>
            <person name="Inoue Y."/>
            <person name="Takeya M."/>
            <person name="Sasaki A."/>
            <person name="Kaku H."/>
        </authorList>
    </citation>
    <scope>NUCLEOTIDE SEQUENCE [LARGE SCALE GENOMIC DNA]</scope>
    <source>
        <strain>MAFF 311018</strain>
    </source>
</reference>
<dbReference type="EC" id="3.4.24.-" evidence="1"/>
<dbReference type="EMBL" id="AP008229">
    <property type="protein sequence ID" value="BAE69326.1"/>
    <property type="molecule type" value="Genomic_DNA"/>
</dbReference>
<dbReference type="RefSeq" id="WP_011259328.1">
    <property type="nucleotide sequence ID" value="NC_007705.1"/>
</dbReference>
<dbReference type="SMR" id="Q2P2A1"/>
<dbReference type="MEROPS" id="M48.002"/>
<dbReference type="KEGG" id="xom:XOO2571"/>
<dbReference type="HOGENOM" id="CLU_042266_1_0_6"/>
<dbReference type="GO" id="GO:0005886">
    <property type="term" value="C:plasma membrane"/>
    <property type="evidence" value="ECO:0007669"/>
    <property type="project" value="UniProtKB-SubCell"/>
</dbReference>
<dbReference type="GO" id="GO:0004222">
    <property type="term" value="F:metalloendopeptidase activity"/>
    <property type="evidence" value="ECO:0007669"/>
    <property type="project" value="UniProtKB-UniRule"/>
</dbReference>
<dbReference type="GO" id="GO:0008270">
    <property type="term" value="F:zinc ion binding"/>
    <property type="evidence" value="ECO:0007669"/>
    <property type="project" value="UniProtKB-UniRule"/>
</dbReference>
<dbReference type="GO" id="GO:0006508">
    <property type="term" value="P:proteolysis"/>
    <property type="evidence" value="ECO:0007669"/>
    <property type="project" value="UniProtKB-KW"/>
</dbReference>
<dbReference type="CDD" id="cd07335">
    <property type="entry name" value="M48B_HtpX_like"/>
    <property type="match status" value="1"/>
</dbReference>
<dbReference type="Gene3D" id="3.30.2010.10">
    <property type="entry name" value="Metalloproteases ('zincins'), catalytic domain"/>
    <property type="match status" value="1"/>
</dbReference>
<dbReference type="HAMAP" id="MF_00188">
    <property type="entry name" value="Pept_M48_protease_HtpX"/>
    <property type="match status" value="1"/>
</dbReference>
<dbReference type="InterPro" id="IPR050083">
    <property type="entry name" value="HtpX_protease"/>
</dbReference>
<dbReference type="InterPro" id="IPR022919">
    <property type="entry name" value="Pept_M48_protease_HtpX"/>
</dbReference>
<dbReference type="InterPro" id="IPR001915">
    <property type="entry name" value="Peptidase_M48"/>
</dbReference>
<dbReference type="NCBIfam" id="NF003965">
    <property type="entry name" value="PRK05457.1"/>
    <property type="match status" value="1"/>
</dbReference>
<dbReference type="PANTHER" id="PTHR43221">
    <property type="entry name" value="PROTEASE HTPX"/>
    <property type="match status" value="1"/>
</dbReference>
<dbReference type="PANTHER" id="PTHR43221:SF1">
    <property type="entry name" value="PROTEASE HTPX"/>
    <property type="match status" value="1"/>
</dbReference>
<dbReference type="Pfam" id="PF01435">
    <property type="entry name" value="Peptidase_M48"/>
    <property type="match status" value="1"/>
</dbReference>
<protein>
    <recommendedName>
        <fullName evidence="1">Protease HtpX</fullName>
        <ecNumber evidence="1">3.4.24.-</ecNumber>
    </recommendedName>
    <alternativeName>
        <fullName evidence="1">Heat shock protein HtpX</fullName>
    </alternativeName>
</protein>
<sequence>MFNRIFLFLLTNVAVLMLAGVVMSVLGVNPAQMSGLLVMAAIFGFGGSFISLLLSKFMAKRSTGAQVITEPRTPTERWLLETVRRQAQAAGIGMPEVAVYDGPEINAFATGANRNNALVAVSTGLLQHMDQDEAEAVLGHEIAHVANGDMVTMALLQGVLNTFVIVLARVVGGIIDSAVSGNRDSGRGFAYYIIVFVLEMVFGMFATMIAMWFSRRREFRADAGGAQLAGRSKMIAALERLSLNHGQNTLPSQVQAFGISGGVGDGLRRLFLSHPPLTERIAALRAANGTAM</sequence>
<feature type="chain" id="PRO_1000020970" description="Protease HtpX">
    <location>
        <begin position="1"/>
        <end position="292"/>
    </location>
</feature>
<feature type="transmembrane region" description="Helical" evidence="1">
    <location>
        <begin position="5"/>
        <end position="25"/>
    </location>
</feature>
<feature type="transmembrane region" description="Helical" evidence="1">
    <location>
        <begin position="34"/>
        <end position="54"/>
    </location>
</feature>
<feature type="transmembrane region" description="Helical" evidence="1">
    <location>
        <begin position="155"/>
        <end position="175"/>
    </location>
</feature>
<feature type="transmembrane region" description="Helical" evidence="1">
    <location>
        <begin position="193"/>
        <end position="213"/>
    </location>
</feature>
<feature type="active site" evidence="1">
    <location>
        <position position="141"/>
    </location>
</feature>
<feature type="binding site" evidence="1">
    <location>
        <position position="140"/>
    </location>
    <ligand>
        <name>Zn(2+)</name>
        <dbReference type="ChEBI" id="CHEBI:29105"/>
        <note>catalytic</note>
    </ligand>
</feature>
<feature type="binding site" evidence="1">
    <location>
        <position position="144"/>
    </location>
    <ligand>
        <name>Zn(2+)</name>
        <dbReference type="ChEBI" id="CHEBI:29105"/>
        <note>catalytic</note>
    </ligand>
</feature>
<feature type="binding site" evidence="1">
    <location>
        <position position="218"/>
    </location>
    <ligand>
        <name>Zn(2+)</name>
        <dbReference type="ChEBI" id="CHEBI:29105"/>
        <note>catalytic</note>
    </ligand>
</feature>
<accession>Q2P2A1</accession>
<keyword id="KW-0997">Cell inner membrane</keyword>
<keyword id="KW-1003">Cell membrane</keyword>
<keyword id="KW-0378">Hydrolase</keyword>
<keyword id="KW-0472">Membrane</keyword>
<keyword id="KW-0479">Metal-binding</keyword>
<keyword id="KW-0482">Metalloprotease</keyword>
<keyword id="KW-0645">Protease</keyword>
<keyword id="KW-0346">Stress response</keyword>
<keyword id="KW-0812">Transmembrane</keyword>
<keyword id="KW-1133">Transmembrane helix</keyword>
<keyword id="KW-0862">Zinc</keyword>
<evidence type="ECO:0000255" key="1">
    <source>
        <dbReference type="HAMAP-Rule" id="MF_00188"/>
    </source>
</evidence>